<organism>
    <name type="scientific">Thermococcus onnurineus (strain NA1)</name>
    <dbReference type="NCBI Taxonomy" id="523850"/>
    <lineage>
        <taxon>Archaea</taxon>
        <taxon>Methanobacteriati</taxon>
        <taxon>Methanobacteriota</taxon>
        <taxon>Thermococci</taxon>
        <taxon>Thermococcales</taxon>
        <taxon>Thermococcaceae</taxon>
        <taxon>Thermococcus</taxon>
    </lineage>
</organism>
<dbReference type="EC" id="1.1.1.26" evidence="1"/>
<dbReference type="EMBL" id="CP000855">
    <property type="protein sequence ID" value="ACJ16433.1"/>
    <property type="molecule type" value="Genomic_DNA"/>
</dbReference>
<dbReference type="RefSeq" id="WP_012571905.1">
    <property type="nucleotide sequence ID" value="NC_011529.1"/>
</dbReference>
<dbReference type="SMR" id="B6YWH0"/>
<dbReference type="STRING" id="523850.TON_0945"/>
<dbReference type="GeneID" id="7017248"/>
<dbReference type="KEGG" id="ton:TON_0945"/>
<dbReference type="PATRIC" id="fig|523850.10.peg.953"/>
<dbReference type="eggNOG" id="arCOG01755">
    <property type="taxonomic scope" value="Archaea"/>
</dbReference>
<dbReference type="HOGENOM" id="CLU_019796_1_2_2"/>
<dbReference type="OrthoDB" id="34275at2157"/>
<dbReference type="Proteomes" id="UP000002727">
    <property type="component" value="Chromosome"/>
</dbReference>
<dbReference type="GO" id="GO:0005829">
    <property type="term" value="C:cytosol"/>
    <property type="evidence" value="ECO:0007669"/>
    <property type="project" value="TreeGrafter"/>
</dbReference>
<dbReference type="GO" id="GO:0047964">
    <property type="term" value="F:glyoxylate reductase (NADH) activity"/>
    <property type="evidence" value="ECO:0007669"/>
    <property type="project" value="UniProtKB-UniRule"/>
</dbReference>
<dbReference type="GO" id="GO:0030267">
    <property type="term" value="F:glyoxylate reductase (NADPH) activity"/>
    <property type="evidence" value="ECO:0007669"/>
    <property type="project" value="TreeGrafter"/>
</dbReference>
<dbReference type="GO" id="GO:0016618">
    <property type="term" value="F:hydroxypyruvate reductase [NAD(P)H] activity"/>
    <property type="evidence" value="ECO:0007669"/>
    <property type="project" value="TreeGrafter"/>
</dbReference>
<dbReference type="GO" id="GO:0051287">
    <property type="term" value="F:NAD binding"/>
    <property type="evidence" value="ECO:0007669"/>
    <property type="project" value="InterPro"/>
</dbReference>
<dbReference type="CDD" id="cd05301">
    <property type="entry name" value="GDH"/>
    <property type="match status" value="1"/>
</dbReference>
<dbReference type="FunFam" id="3.40.50.720:FF:000462">
    <property type="entry name" value="Glyoxylate reductase (NADP+)"/>
    <property type="match status" value="1"/>
</dbReference>
<dbReference type="Gene3D" id="3.40.50.720">
    <property type="entry name" value="NAD(P)-binding Rossmann-like Domain"/>
    <property type="match status" value="2"/>
</dbReference>
<dbReference type="HAMAP" id="MF_00776">
    <property type="entry name" value="GyaR"/>
    <property type="match status" value="1"/>
</dbReference>
<dbReference type="InterPro" id="IPR050223">
    <property type="entry name" value="D-isomer_2-hydroxyacid_DH"/>
</dbReference>
<dbReference type="InterPro" id="IPR006139">
    <property type="entry name" value="D-isomer_2_OHA_DH_cat_dom"/>
</dbReference>
<dbReference type="InterPro" id="IPR029753">
    <property type="entry name" value="D-isomer_DH_CS"/>
</dbReference>
<dbReference type="InterPro" id="IPR006140">
    <property type="entry name" value="D-isomer_DH_NAD-bd"/>
</dbReference>
<dbReference type="InterPro" id="IPR023519">
    <property type="entry name" value="Glyoxylate_reductase_GyaR"/>
</dbReference>
<dbReference type="InterPro" id="IPR036291">
    <property type="entry name" value="NAD(P)-bd_dom_sf"/>
</dbReference>
<dbReference type="NCBIfam" id="NF009714">
    <property type="entry name" value="PRK13243.1"/>
    <property type="match status" value="1"/>
</dbReference>
<dbReference type="PANTHER" id="PTHR10996">
    <property type="entry name" value="2-HYDROXYACID DEHYDROGENASE-RELATED"/>
    <property type="match status" value="1"/>
</dbReference>
<dbReference type="PANTHER" id="PTHR10996:SF283">
    <property type="entry name" value="GLYOXYLATE_HYDROXYPYRUVATE REDUCTASE B"/>
    <property type="match status" value="1"/>
</dbReference>
<dbReference type="Pfam" id="PF00389">
    <property type="entry name" value="2-Hacid_dh"/>
    <property type="match status" value="1"/>
</dbReference>
<dbReference type="Pfam" id="PF02826">
    <property type="entry name" value="2-Hacid_dh_C"/>
    <property type="match status" value="1"/>
</dbReference>
<dbReference type="SUPFAM" id="SSF52283">
    <property type="entry name" value="Formate/glycerate dehydrogenase catalytic domain-like"/>
    <property type="match status" value="1"/>
</dbReference>
<dbReference type="SUPFAM" id="SSF51735">
    <property type="entry name" value="NAD(P)-binding Rossmann-fold domains"/>
    <property type="match status" value="1"/>
</dbReference>
<dbReference type="PROSITE" id="PS00671">
    <property type="entry name" value="D_2_HYDROXYACID_DH_3"/>
    <property type="match status" value="1"/>
</dbReference>
<protein>
    <recommendedName>
        <fullName evidence="1">Glyoxylate reductase</fullName>
        <ecNumber evidence="1">1.1.1.26</ecNumber>
    </recommendedName>
</protein>
<keyword id="KW-0963">Cytoplasm</keyword>
<keyword id="KW-0520">NAD</keyword>
<keyword id="KW-0560">Oxidoreductase</keyword>
<name>GYAR_THEON</name>
<sequence length="334" mass="37780">MKPKVLITRKIPENGIKMLREHFEVEVWEDEHEISREVLLEKVRDVDALVTMLSERIDAEVFDAAPRLKIVANYAVGYDNIDIEEATKMGVYITNTPDVLTNATADMAWVLLLATARRLIEADKFVRSGEWKKRGVAWHPLMFLGYDVYGRTIGIVGFGRIGQAIARRAKGFGMRILYNSRTRKPEVEKELGAEFMPLDELLKESDFVVLVVPLTKETYHMINEERLKLMKPTAILVNIARGKVVDTEALVKALREGWIAGAGLDVFEEEPYYHEELFSLDNVVLAPHIGSATYGAREGMAELVARNLIAFKNGEVPPTLVNREVLNVRKPGFE</sequence>
<accession>B6YWH0</accession>
<feature type="chain" id="PRO_1000201582" description="Glyoxylate reductase">
    <location>
        <begin position="1"/>
        <end position="334"/>
    </location>
</feature>
<feature type="active site" evidence="1">
    <location>
        <position position="241"/>
    </location>
</feature>
<feature type="active site" evidence="1">
    <location>
        <position position="270"/>
    </location>
</feature>
<feature type="active site" description="Proton donor" evidence="1">
    <location>
        <position position="288"/>
    </location>
</feature>
<feature type="binding site" evidence="1">
    <location>
        <begin position="158"/>
        <end position="161"/>
    </location>
    <ligand>
        <name>NADP(+)</name>
        <dbReference type="ChEBI" id="CHEBI:58349"/>
    </ligand>
</feature>
<feature type="binding site" evidence="1">
    <location>
        <begin position="180"/>
        <end position="182"/>
    </location>
    <ligand>
        <name>NADP(+)</name>
        <dbReference type="ChEBI" id="CHEBI:58349"/>
    </ligand>
</feature>
<feature type="binding site" evidence="1">
    <location>
        <begin position="239"/>
        <end position="241"/>
    </location>
    <ligand>
        <name>NADP(+)</name>
        <dbReference type="ChEBI" id="CHEBI:58349"/>
    </ligand>
</feature>
<feature type="binding site" evidence="1">
    <location>
        <begin position="288"/>
        <end position="290"/>
    </location>
    <ligand>
        <name>NADP(+)</name>
        <dbReference type="ChEBI" id="CHEBI:58349"/>
    </ligand>
</feature>
<gene>
    <name evidence="1" type="primary">gyaR</name>
    <name type="ordered locus">TON_0945</name>
</gene>
<proteinExistence type="inferred from homology"/>
<comment type="catalytic activity">
    <reaction evidence="1">
        <text>glycolate + NAD(+) = glyoxylate + NADH + H(+)</text>
        <dbReference type="Rhea" id="RHEA:18229"/>
        <dbReference type="ChEBI" id="CHEBI:15378"/>
        <dbReference type="ChEBI" id="CHEBI:29805"/>
        <dbReference type="ChEBI" id="CHEBI:36655"/>
        <dbReference type="ChEBI" id="CHEBI:57540"/>
        <dbReference type="ChEBI" id="CHEBI:57945"/>
        <dbReference type="EC" id="1.1.1.26"/>
    </reaction>
</comment>
<comment type="subunit">
    <text evidence="1">Homodimer.</text>
</comment>
<comment type="subcellular location">
    <subcellularLocation>
        <location evidence="1">Cytoplasm</location>
    </subcellularLocation>
</comment>
<comment type="similarity">
    <text evidence="1">Belongs to the D-isomer specific 2-hydroxyacid dehydrogenase family. GyaR subfamily.</text>
</comment>
<reference key="1">
    <citation type="journal article" date="2008" name="J. Bacteriol.">
        <title>The complete genome sequence of Thermococcus onnurineus NA1 reveals a mixed heterotrophic and carboxydotrophic metabolism.</title>
        <authorList>
            <person name="Lee H.S."/>
            <person name="Kang S.G."/>
            <person name="Bae S.S."/>
            <person name="Lim J.K."/>
            <person name="Cho Y."/>
            <person name="Kim Y.J."/>
            <person name="Jeon J.H."/>
            <person name="Cha S.-S."/>
            <person name="Kwon K.K."/>
            <person name="Kim H.-T."/>
            <person name="Park C.-J."/>
            <person name="Lee H.-W."/>
            <person name="Kim S.I."/>
            <person name="Chun J."/>
            <person name="Colwell R.R."/>
            <person name="Kim S.-J."/>
            <person name="Lee J.-H."/>
        </authorList>
    </citation>
    <scope>NUCLEOTIDE SEQUENCE [LARGE SCALE GENOMIC DNA]</scope>
    <source>
        <strain>NA1</strain>
    </source>
</reference>
<evidence type="ECO:0000255" key="1">
    <source>
        <dbReference type="HAMAP-Rule" id="MF_00776"/>
    </source>
</evidence>